<dbReference type="EC" id="1.1.1.94" evidence="1"/>
<dbReference type="EMBL" id="BA000030">
    <property type="protein sequence ID" value="BAC70391.1"/>
    <property type="molecule type" value="Genomic_DNA"/>
</dbReference>
<dbReference type="RefSeq" id="WP_010984112.1">
    <property type="nucleotide sequence ID" value="NZ_JZJK01000071.1"/>
</dbReference>
<dbReference type="SMR" id="Q82JS4"/>
<dbReference type="GeneID" id="41539763"/>
<dbReference type="KEGG" id="sma:SAVERM_2680"/>
<dbReference type="eggNOG" id="COG0240">
    <property type="taxonomic scope" value="Bacteria"/>
</dbReference>
<dbReference type="HOGENOM" id="CLU_033449_0_2_11"/>
<dbReference type="OrthoDB" id="9812273at2"/>
<dbReference type="UniPathway" id="UPA00940"/>
<dbReference type="Proteomes" id="UP000000428">
    <property type="component" value="Chromosome"/>
</dbReference>
<dbReference type="GO" id="GO:0005829">
    <property type="term" value="C:cytosol"/>
    <property type="evidence" value="ECO:0007669"/>
    <property type="project" value="TreeGrafter"/>
</dbReference>
<dbReference type="GO" id="GO:0047952">
    <property type="term" value="F:glycerol-3-phosphate dehydrogenase [NAD(P)+] activity"/>
    <property type="evidence" value="ECO:0007669"/>
    <property type="project" value="UniProtKB-UniRule"/>
</dbReference>
<dbReference type="GO" id="GO:0051287">
    <property type="term" value="F:NAD binding"/>
    <property type="evidence" value="ECO:0007669"/>
    <property type="project" value="InterPro"/>
</dbReference>
<dbReference type="GO" id="GO:0005975">
    <property type="term" value="P:carbohydrate metabolic process"/>
    <property type="evidence" value="ECO:0007669"/>
    <property type="project" value="InterPro"/>
</dbReference>
<dbReference type="GO" id="GO:0046167">
    <property type="term" value="P:glycerol-3-phosphate biosynthetic process"/>
    <property type="evidence" value="ECO:0007669"/>
    <property type="project" value="UniProtKB-UniRule"/>
</dbReference>
<dbReference type="GO" id="GO:0046168">
    <property type="term" value="P:glycerol-3-phosphate catabolic process"/>
    <property type="evidence" value="ECO:0007669"/>
    <property type="project" value="InterPro"/>
</dbReference>
<dbReference type="GO" id="GO:0006650">
    <property type="term" value="P:glycerophospholipid metabolic process"/>
    <property type="evidence" value="ECO:0007669"/>
    <property type="project" value="UniProtKB-UniRule"/>
</dbReference>
<dbReference type="GO" id="GO:0008654">
    <property type="term" value="P:phospholipid biosynthetic process"/>
    <property type="evidence" value="ECO:0007669"/>
    <property type="project" value="UniProtKB-KW"/>
</dbReference>
<dbReference type="FunFam" id="1.10.1040.10:FF:000001">
    <property type="entry name" value="Glycerol-3-phosphate dehydrogenase [NAD(P)+]"/>
    <property type="match status" value="1"/>
</dbReference>
<dbReference type="FunFam" id="3.40.50.720:FF:000019">
    <property type="entry name" value="Glycerol-3-phosphate dehydrogenase [NAD(P)+]"/>
    <property type="match status" value="1"/>
</dbReference>
<dbReference type="Gene3D" id="1.10.1040.10">
    <property type="entry name" value="N-(1-d-carboxylethyl)-l-norvaline Dehydrogenase, domain 2"/>
    <property type="match status" value="1"/>
</dbReference>
<dbReference type="Gene3D" id="3.40.50.720">
    <property type="entry name" value="NAD(P)-binding Rossmann-like Domain"/>
    <property type="match status" value="1"/>
</dbReference>
<dbReference type="HAMAP" id="MF_00394">
    <property type="entry name" value="NAD_Glyc3P_dehydrog"/>
    <property type="match status" value="1"/>
</dbReference>
<dbReference type="InterPro" id="IPR008927">
    <property type="entry name" value="6-PGluconate_DH-like_C_sf"/>
</dbReference>
<dbReference type="InterPro" id="IPR013328">
    <property type="entry name" value="6PGD_dom2"/>
</dbReference>
<dbReference type="InterPro" id="IPR006168">
    <property type="entry name" value="G3P_DH_NAD-dep"/>
</dbReference>
<dbReference type="InterPro" id="IPR006109">
    <property type="entry name" value="G3P_DH_NAD-dep_C"/>
</dbReference>
<dbReference type="InterPro" id="IPR011128">
    <property type="entry name" value="G3P_DH_NAD-dep_N"/>
</dbReference>
<dbReference type="InterPro" id="IPR036291">
    <property type="entry name" value="NAD(P)-bd_dom_sf"/>
</dbReference>
<dbReference type="NCBIfam" id="NF000940">
    <property type="entry name" value="PRK00094.1-2"/>
    <property type="match status" value="1"/>
</dbReference>
<dbReference type="NCBIfam" id="NF000942">
    <property type="entry name" value="PRK00094.1-4"/>
    <property type="match status" value="1"/>
</dbReference>
<dbReference type="PANTHER" id="PTHR11728">
    <property type="entry name" value="GLYCEROL-3-PHOSPHATE DEHYDROGENASE"/>
    <property type="match status" value="1"/>
</dbReference>
<dbReference type="PANTHER" id="PTHR11728:SF1">
    <property type="entry name" value="GLYCEROL-3-PHOSPHATE DEHYDROGENASE [NAD(+)] 2, CHLOROPLASTIC"/>
    <property type="match status" value="1"/>
</dbReference>
<dbReference type="Pfam" id="PF07479">
    <property type="entry name" value="NAD_Gly3P_dh_C"/>
    <property type="match status" value="1"/>
</dbReference>
<dbReference type="Pfam" id="PF01210">
    <property type="entry name" value="NAD_Gly3P_dh_N"/>
    <property type="match status" value="1"/>
</dbReference>
<dbReference type="PIRSF" id="PIRSF000114">
    <property type="entry name" value="Glycerol-3-P_dh"/>
    <property type="match status" value="1"/>
</dbReference>
<dbReference type="PRINTS" id="PR00077">
    <property type="entry name" value="GPDHDRGNASE"/>
</dbReference>
<dbReference type="SUPFAM" id="SSF48179">
    <property type="entry name" value="6-phosphogluconate dehydrogenase C-terminal domain-like"/>
    <property type="match status" value="1"/>
</dbReference>
<dbReference type="SUPFAM" id="SSF51735">
    <property type="entry name" value="NAD(P)-binding Rossmann-fold domains"/>
    <property type="match status" value="1"/>
</dbReference>
<dbReference type="PROSITE" id="PS00957">
    <property type="entry name" value="NAD_G3PDH"/>
    <property type="match status" value="1"/>
</dbReference>
<protein>
    <recommendedName>
        <fullName evidence="1">Glycerol-3-phosphate dehydrogenase [NAD(P)+]</fullName>
        <ecNumber evidence="1">1.1.1.94</ecNumber>
    </recommendedName>
    <alternativeName>
        <fullName evidence="1">NAD(P)(+)-dependent glycerol-3-phosphate dehydrogenase</fullName>
    </alternativeName>
    <alternativeName>
        <fullName evidence="1">NAD(P)H-dependent dihydroxyacetone-phosphate reductase</fullName>
    </alternativeName>
</protein>
<proteinExistence type="inferred from homology"/>
<sequence length="336" mass="34928">MSTPVKAAVFGTGSWGTAFGMVLADAGCDVTLWARRAELADAVNSTRTNPDYLPGVELPENLRATTDPAEAARAADFTVLAVPSQTLRGNLAEWVPLLAPDTVLVSLMKGVELGSAMRMSEVVEDVAKVGADRIAVVTGPNLAREIAARMPAAAVVACANEAVAQRLQAACHTPYFRPYTNTDVVGCELGGAVKNVIGLAVGIADGMGLGDNAKGSLITRGLAETTRLGLVMGADPLTFSGLAGLGDLVATCSSPLSRNHTFGTNLGRGMTLQETIAVTKQTAEGVKSCESVLDLARRHGVDMPITETVVGIVHEGKPPVVALKELMSRSAKPERR</sequence>
<comment type="function">
    <text evidence="1">Catalyzes the reduction of the glycolytic intermediate dihydroxyacetone phosphate (DHAP) to sn-glycerol 3-phosphate (G3P), the key precursor for phospholipid synthesis.</text>
</comment>
<comment type="catalytic activity">
    <reaction evidence="1">
        <text>sn-glycerol 3-phosphate + NAD(+) = dihydroxyacetone phosphate + NADH + H(+)</text>
        <dbReference type="Rhea" id="RHEA:11092"/>
        <dbReference type="ChEBI" id="CHEBI:15378"/>
        <dbReference type="ChEBI" id="CHEBI:57540"/>
        <dbReference type="ChEBI" id="CHEBI:57597"/>
        <dbReference type="ChEBI" id="CHEBI:57642"/>
        <dbReference type="ChEBI" id="CHEBI:57945"/>
        <dbReference type="EC" id="1.1.1.94"/>
    </reaction>
    <physiologicalReaction direction="right-to-left" evidence="1">
        <dbReference type="Rhea" id="RHEA:11094"/>
    </physiologicalReaction>
</comment>
<comment type="catalytic activity">
    <reaction evidence="1">
        <text>sn-glycerol 3-phosphate + NADP(+) = dihydroxyacetone phosphate + NADPH + H(+)</text>
        <dbReference type="Rhea" id="RHEA:11096"/>
        <dbReference type="ChEBI" id="CHEBI:15378"/>
        <dbReference type="ChEBI" id="CHEBI:57597"/>
        <dbReference type="ChEBI" id="CHEBI:57642"/>
        <dbReference type="ChEBI" id="CHEBI:57783"/>
        <dbReference type="ChEBI" id="CHEBI:58349"/>
        <dbReference type="EC" id="1.1.1.94"/>
    </reaction>
    <physiologicalReaction direction="right-to-left" evidence="1">
        <dbReference type="Rhea" id="RHEA:11098"/>
    </physiologicalReaction>
</comment>
<comment type="pathway">
    <text evidence="1">Membrane lipid metabolism; glycerophospholipid metabolism.</text>
</comment>
<comment type="subcellular location">
    <subcellularLocation>
        <location evidence="1">Cytoplasm</location>
    </subcellularLocation>
</comment>
<comment type="similarity">
    <text evidence="1">Belongs to the NAD-dependent glycerol-3-phosphate dehydrogenase family.</text>
</comment>
<gene>
    <name evidence="1" type="primary">gpsA</name>
    <name type="ordered locus">SAV_2680</name>
</gene>
<accession>Q82JS4</accession>
<reference key="1">
    <citation type="journal article" date="2001" name="Proc. Natl. Acad. Sci. U.S.A.">
        <title>Genome sequence of an industrial microorganism Streptomyces avermitilis: deducing the ability of producing secondary metabolites.</title>
        <authorList>
            <person name="Omura S."/>
            <person name="Ikeda H."/>
            <person name="Ishikawa J."/>
            <person name="Hanamoto A."/>
            <person name="Takahashi C."/>
            <person name="Shinose M."/>
            <person name="Takahashi Y."/>
            <person name="Horikawa H."/>
            <person name="Nakazawa H."/>
            <person name="Osonoe T."/>
            <person name="Kikuchi H."/>
            <person name="Shiba T."/>
            <person name="Sakaki Y."/>
            <person name="Hattori M."/>
        </authorList>
    </citation>
    <scope>NUCLEOTIDE SEQUENCE [LARGE SCALE GENOMIC DNA]</scope>
    <source>
        <strain>ATCC 31267 / DSM 46492 / JCM 5070 / NBRC 14893 / NCIMB 12804 / NRRL 8165 / MA-4680</strain>
    </source>
</reference>
<reference key="2">
    <citation type="journal article" date="2003" name="Nat. Biotechnol.">
        <title>Complete genome sequence and comparative analysis of the industrial microorganism Streptomyces avermitilis.</title>
        <authorList>
            <person name="Ikeda H."/>
            <person name="Ishikawa J."/>
            <person name="Hanamoto A."/>
            <person name="Shinose M."/>
            <person name="Kikuchi H."/>
            <person name="Shiba T."/>
            <person name="Sakaki Y."/>
            <person name="Hattori M."/>
            <person name="Omura S."/>
        </authorList>
    </citation>
    <scope>NUCLEOTIDE SEQUENCE [LARGE SCALE GENOMIC DNA]</scope>
    <source>
        <strain>ATCC 31267 / DSM 46492 / JCM 5070 / NBRC 14893 / NCIMB 12804 / NRRL 8165 / MA-4680</strain>
    </source>
</reference>
<name>GPDA_STRAW</name>
<organism>
    <name type="scientific">Streptomyces avermitilis (strain ATCC 31267 / DSM 46492 / JCM 5070 / NBRC 14893 / NCIMB 12804 / NRRL 8165 / MA-4680)</name>
    <dbReference type="NCBI Taxonomy" id="227882"/>
    <lineage>
        <taxon>Bacteria</taxon>
        <taxon>Bacillati</taxon>
        <taxon>Actinomycetota</taxon>
        <taxon>Actinomycetes</taxon>
        <taxon>Kitasatosporales</taxon>
        <taxon>Streptomycetaceae</taxon>
        <taxon>Streptomyces</taxon>
    </lineage>
</organism>
<evidence type="ECO:0000255" key="1">
    <source>
        <dbReference type="HAMAP-Rule" id="MF_00394"/>
    </source>
</evidence>
<keyword id="KW-0963">Cytoplasm</keyword>
<keyword id="KW-0444">Lipid biosynthesis</keyword>
<keyword id="KW-0443">Lipid metabolism</keyword>
<keyword id="KW-0520">NAD</keyword>
<keyword id="KW-0521">NADP</keyword>
<keyword id="KW-0547">Nucleotide-binding</keyword>
<keyword id="KW-0560">Oxidoreductase</keyword>
<keyword id="KW-0594">Phospholipid biosynthesis</keyword>
<keyword id="KW-1208">Phospholipid metabolism</keyword>
<keyword id="KW-1185">Reference proteome</keyword>
<feature type="chain" id="PRO_0000138035" description="Glycerol-3-phosphate dehydrogenase [NAD(P)+]">
    <location>
        <begin position="1"/>
        <end position="336"/>
    </location>
</feature>
<feature type="active site" description="Proton acceptor" evidence="1">
    <location>
        <position position="194"/>
    </location>
</feature>
<feature type="binding site" evidence="1">
    <location>
        <position position="14"/>
    </location>
    <ligand>
        <name>NADPH</name>
        <dbReference type="ChEBI" id="CHEBI:57783"/>
    </ligand>
</feature>
<feature type="binding site" evidence="1">
    <location>
        <position position="15"/>
    </location>
    <ligand>
        <name>NADPH</name>
        <dbReference type="ChEBI" id="CHEBI:57783"/>
    </ligand>
</feature>
<feature type="binding site" evidence="1">
    <location>
        <position position="35"/>
    </location>
    <ligand>
        <name>NADPH</name>
        <dbReference type="ChEBI" id="CHEBI:57783"/>
    </ligand>
</feature>
<feature type="binding site" evidence="1">
    <location>
        <position position="36"/>
    </location>
    <ligand>
        <name>NADPH</name>
        <dbReference type="ChEBI" id="CHEBI:57783"/>
    </ligand>
</feature>
<feature type="binding site" evidence="1">
    <location>
        <position position="109"/>
    </location>
    <ligand>
        <name>NADPH</name>
        <dbReference type="ChEBI" id="CHEBI:57783"/>
    </ligand>
</feature>
<feature type="binding site" evidence="1">
    <location>
        <position position="109"/>
    </location>
    <ligand>
        <name>sn-glycerol 3-phosphate</name>
        <dbReference type="ChEBI" id="CHEBI:57597"/>
    </ligand>
</feature>
<feature type="binding site" evidence="1">
    <location>
        <position position="139"/>
    </location>
    <ligand>
        <name>sn-glycerol 3-phosphate</name>
        <dbReference type="ChEBI" id="CHEBI:57597"/>
    </ligand>
</feature>
<feature type="binding site" evidence="1">
    <location>
        <position position="143"/>
    </location>
    <ligand>
        <name>NADPH</name>
        <dbReference type="ChEBI" id="CHEBI:57783"/>
    </ligand>
</feature>
<feature type="binding site" evidence="1">
    <location>
        <position position="194"/>
    </location>
    <ligand>
        <name>sn-glycerol 3-phosphate</name>
        <dbReference type="ChEBI" id="CHEBI:57597"/>
    </ligand>
</feature>
<feature type="binding site" evidence="1">
    <location>
        <position position="247"/>
    </location>
    <ligand>
        <name>sn-glycerol 3-phosphate</name>
        <dbReference type="ChEBI" id="CHEBI:57597"/>
    </ligand>
</feature>
<feature type="binding site" evidence="1">
    <location>
        <position position="257"/>
    </location>
    <ligand>
        <name>sn-glycerol 3-phosphate</name>
        <dbReference type="ChEBI" id="CHEBI:57597"/>
    </ligand>
</feature>
<feature type="binding site" evidence="1">
    <location>
        <position position="258"/>
    </location>
    <ligand>
        <name>NADPH</name>
        <dbReference type="ChEBI" id="CHEBI:57783"/>
    </ligand>
</feature>
<feature type="binding site" evidence="1">
    <location>
        <position position="258"/>
    </location>
    <ligand>
        <name>sn-glycerol 3-phosphate</name>
        <dbReference type="ChEBI" id="CHEBI:57597"/>
    </ligand>
</feature>
<feature type="binding site" evidence="1">
    <location>
        <position position="259"/>
    </location>
    <ligand>
        <name>sn-glycerol 3-phosphate</name>
        <dbReference type="ChEBI" id="CHEBI:57597"/>
    </ligand>
</feature>
<feature type="binding site" evidence="1">
    <location>
        <position position="284"/>
    </location>
    <ligand>
        <name>NADPH</name>
        <dbReference type="ChEBI" id="CHEBI:57783"/>
    </ligand>
</feature>